<evidence type="ECO:0000255" key="1">
    <source>
        <dbReference type="HAMAP-Rule" id="MF_00654"/>
    </source>
</evidence>
<name>PQQC_ACIBY</name>
<keyword id="KW-0560">Oxidoreductase</keyword>
<keyword id="KW-0884">PQQ biosynthesis</keyword>
<sequence length="252" mass="29665">MTQTPEALTTEQFKQAIIDKGQYYHIYHPFHVMMYEGKATQQQIQAWVANRYYYQINIPLKDAAIMANCPDQRVRQEWIQRMIDQDGEYPDGGGREAWLRLAEAVGLSREQVISEELVLPGVRFAVDAYVNFARRASWREAASSSLTELFAPQIHQSRLESWPQHYPWIDDKGYEYFRSRLSQARRDVEHGLTITLDSFTTHEQQQRMLEILQFKLDILWSILDALTLAYVHNEAPYHSVTQERVWHKGLFK</sequence>
<gene>
    <name evidence="1" type="primary">pqqC</name>
    <name type="ordered locus">ABAYE1880</name>
</gene>
<proteinExistence type="inferred from homology"/>
<dbReference type="EC" id="1.3.3.11" evidence="1"/>
<dbReference type="EMBL" id="CU459141">
    <property type="protein sequence ID" value="CAM86762.1"/>
    <property type="molecule type" value="Genomic_DNA"/>
</dbReference>
<dbReference type="RefSeq" id="WP_000195110.1">
    <property type="nucleotide sequence ID" value="NZ_JBDGFB010000001.1"/>
</dbReference>
<dbReference type="SMR" id="B0V496"/>
<dbReference type="EnsemblBacteria" id="CAM86762">
    <property type="protein sequence ID" value="CAM86762"/>
    <property type="gene ID" value="ABAYE1880"/>
</dbReference>
<dbReference type="GeneID" id="92893973"/>
<dbReference type="KEGG" id="aby:ABAYE1880"/>
<dbReference type="HOGENOM" id="CLU_080136_0_0_6"/>
<dbReference type="UniPathway" id="UPA00539"/>
<dbReference type="GO" id="GO:0033732">
    <property type="term" value="F:pyrroloquinoline-quinone synthase activity"/>
    <property type="evidence" value="ECO:0007669"/>
    <property type="project" value="UniProtKB-EC"/>
</dbReference>
<dbReference type="GO" id="GO:0018189">
    <property type="term" value="P:pyrroloquinoline quinone biosynthetic process"/>
    <property type="evidence" value="ECO:0007669"/>
    <property type="project" value="UniProtKB-UniRule"/>
</dbReference>
<dbReference type="GO" id="GO:0006790">
    <property type="term" value="P:sulfur compound metabolic process"/>
    <property type="evidence" value="ECO:0007669"/>
    <property type="project" value="UniProtKB-ARBA"/>
</dbReference>
<dbReference type="Gene3D" id="1.20.910.10">
    <property type="entry name" value="Heme oxygenase-like"/>
    <property type="match status" value="1"/>
</dbReference>
<dbReference type="HAMAP" id="MF_00654">
    <property type="entry name" value="PQQ_syn_PqqC"/>
    <property type="match status" value="1"/>
</dbReference>
<dbReference type="InterPro" id="IPR016084">
    <property type="entry name" value="Haem_Oase-like_multi-hlx"/>
</dbReference>
<dbReference type="InterPro" id="IPR011845">
    <property type="entry name" value="PqqC"/>
</dbReference>
<dbReference type="InterPro" id="IPR039068">
    <property type="entry name" value="PqqC-like"/>
</dbReference>
<dbReference type="InterPro" id="IPR004305">
    <property type="entry name" value="Thiaminase-2/PQQC"/>
</dbReference>
<dbReference type="NCBIfam" id="TIGR02111">
    <property type="entry name" value="PQQ_syn_pqqC"/>
    <property type="match status" value="1"/>
</dbReference>
<dbReference type="PANTHER" id="PTHR40279:SF3">
    <property type="entry name" value="4-AMINOBENZOATE SYNTHASE"/>
    <property type="match status" value="1"/>
</dbReference>
<dbReference type="PANTHER" id="PTHR40279">
    <property type="entry name" value="PQQC-LIKE PROTEIN"/>
    <property type="match status" value="1"/>
</dbReference>
<dbReference type="Pfam" id="PF03070">
    <property type="entry name" value="TENA_THI-4"/>
    <property type="match status" value="1"/>
</dbReference>
<dbReference type="SUPFAM" id="SSF48613">
    <property type="entry name" value="Heme oxygenase-like"/>
    <property type="match status" value="1"/>
</dbReference>
<comment type="function">
    <text evidence="1">Ring cyclization and eight-electron oxidation of 3a-(2-amino-2-carboxyethyl)-4,5-dioxo-4,5,6,7,8,9-hexahydroquinoline-7,9-dicarboxylic-acid to PQQ.</text>
</comment>
<comment type="catalytic activity">
    <reaction evidence="1">
        <text>6-(2-amino-2-carboxyethyl)-7,8-dioxo-1,2,3,4,7,8-hexahydroquinoline-2,4-dicarboxylate + 3 O2 = pyrroloquinoline quinone + 2 H2O2 + 2 H2O + H(+)</text>
        <dbReference type="Rhea" id="RHEA:10692"/>
        <dbReference type="ChEBI" id="CHEBI:15377"/>
        <dbReference type="ChEBI" id="CHEBI:15378"/>
        <dbReference type="ChEBI" id="CHEBI:15379"/>
        <dbReference type="ChEBI" id="CHEBI:16240"/>
        <dbReference type="ChEBI" id="CHEBI:58442"/>
        <dbReference type="ChEBI" id="CHEBI:58778"/>
        <dbReference type="EC" id="1.3.3.11"/>
    </reaction>
</comment>
<comment type="pathway">
    <text evidence="1">Cofactor biosynthesis; pyrroloquinoline quinone biosynthesis.</text>
</comment>
<comment type="similarity">
    <text evidence="1">Belongs to the PqqC family.</text>
</comment>
<protein>
    <recommendedName>
        <fullName evidence="1">Pyrroloquinoline-quinone synthase</fullName>
        <ecNumber evidence="1">1.3.3.11</ecNumber>
    </recommendedName>
    <alternativeName>
        <fullName evidence="1">Coenzyme PQQ synthesis protein C</fullName>
    </alternativeName>
    <alternativeName>
        <fullName evidence="1">Pyrroloquinoline quinone biosynthesis protein C</fullName>
    </alternativeName>
</protein>
<organism>
    <name type="scientific">Acinetobacter baumannii (strain AYE)</name>
    <dbReference type="NCBI Taxonomy" id="509173"/>
    <lineage>
        <taxon>Bacteria</taxon>
        <taxon>Pseudomonadati</taxon>
        <taxon>Pseudomonadota</taxon>
        <taxon>Gammaproteobacteria</taxon>
        <taxon>Moraxellales</taxon>
        <taxon>Moraxellaceae</taxon>
        <taxon>Acinetobacter</taxon>
        <taxon>Acinetobacter calcoaceticus/baumannii complex</taxon>
    </lineage>
</organism>
<reference key="1">
    <citation type="journal article" date="2008" name="PLoS ONE">
        <title>Comparative analysis of Acinetobacters: three genomes for three lifestyles.</title>
        <authorList>
            <person name="Vallenet D."/>
            <person name="Nordmann P."/>
            <person name="Barbe V."/>
            <person name="Poirel L."/>
            <person name="Mangenot S."/>
            <person name="Bataille E."/>
            <person name="Dossat C."/>
            <person name="Gas S."/>
            <person name="Kreimeyer A."/>
            <person name="Lenoble P."/>
            <person name="Oztas S."/>
            <person name="Poulain J."/>
            <person name="Segurens B."/>
            <person name="Robert C."/>
            <person name="Abergel C."/>
            <person name="Claverie J.-M."/>
            <person name="Raoult D."/>
            <person name="Medigue C."/>
            <person name="Weissenbach J."/>
            <person name="Cruveiller S."/>
        </authorList>
    </citation>
    <scope>NUCLEOTIDE SEQUENCE [LARGE SCALE GENOMIC DNA]</scope>
    <source>
        <strain>AYE</strain>
    </source>
</reference>
<feature type="chain" id="PRO_1000131175" description="Pyrroloquinoline-quinone synthase">
    <location>
        <begin position="1"/>
        <end position="252"/>
    </location>
</feature>
<accession>B0V496</accession>